<feature type="chain" id="PRO_1000061478" description="Putative pre-16S rRNA nuclease">
    <location>
        <begin position="1"/>
        <end position="140"/>
    </location>
</feature>
<name>YQGF_AERHH</name>
<gene>
    <name type="ordered locus">AHA_3131</name>
</gene>
<organism>
    <name type="scientific">Aeromonas hydrophila subsp. hydrophila (strain ATCC 7966 / DSM 30187 / BCRC 13018 / CCUG 14551 / JCM 1027 / KCTC 2358 / NCIMB 9240 / NCTC 8049)</name>
    <dbReference type="NCBI Taxonomy" id="380703"/>
    <lineage>
        <taxon>Bacteria</taxon>
        <taxon>Pseudomonadati</taxon>
        <taxon>Pseudomonadota</taxon>
        <taxon>Gammaproteobacteria</taxon>
        <taxon>Aeromonadales</taxon>
        <taxon>Aeromonadaceae</taxon>
        <taxon>Aeromonas</taxon>
    </lineage>
</organism>
<evidence type="ECO:0000255" key="1">
    <source>
        <dbReference type="HAMAP-Rule" id="MF_00651"/>
    </source>
</evidence>
<proteinExistence type="inferred from homology"/>
<sequence length="140" mass="15659">MSSRSIMGFDYGTKSIGVAIGQELTGTAQPLRAIKANDGIPNWDDIDKLLKEWQPDLLVVGLPLNMDGTEQEITVRARKFGNRLHGRFGKQVEFKDERLTTTDARARLFERGGYRALEKGSVDGVSAQLILEAWMEEQYG</sequence>
<comment type="function">
    <text evidence="1">Could be a nuclease involved in processing of the 5'-end of pre-16S rRNA.</text>
</comment>
<comment type="subcellular location">
    <subcellularLocation>
        <location evidence="1">Cytoplasm</location>
    </subcellularLocation>
</comment>
<comment type="similarity">
    <text evidence="1">Belongs to the YqgF nuclease family.</text>
</comment>
<reference key="1">
    <citation type="journal article" date="2006" name="J. Bacteriol.">
        <title>Genome sequence of Aeromonas hydrophila ATCC 7966T: jack of all trades.</title>
        <authorList>
            <person name="Seshadri R."/>
            <person name="Joseph S.W."/>
            <person name="Chopra A.K."/>
            <person name="Sha J."/>
            <person name="Shaw J."/>
            <person name="Graf J."/>
            <person name="Haft D.H."/>
            <person name="Wu M."/>
            <person name="Ren Q."/>
            <person name="Rosovitz M.J."/>
            <person name="Madupu R."/>
            <person name="Tallon L."/>
            <person name="Kim M."/>
            <person name="Jin S."/>
            <person name="Vuong H."/>
            <person name="Stine O.C."/>
            <person name="Ali A."/>
            <person name="Horneman A.J."/>
            <person name="Heidelberg J.F."/>
        </authorList>
    </citation>
    <scope>NUCLEOTIDE SEQUENCE [LARGE SCALE GENOMIC DNA]</scope>
    <source>
        <strain>ATCC 7966 / DSM 30187 / BCRC 13018 / CCUG 14551 / JCM 1027 / KCTC 2358 / NCIMB 9240 / NCTC 8049</strain>
    </source>
</reference>
<accession>A0KMY0</accession>
<keyword id="KW-0963">Cytoplasm</keyword>
<keyword id="KW-0378">Hydrolase</keyword>
<keyword id="KW-0540">Nuclease</keyword>
<keyword id="KW-1185">Reference proteome</keyword>
<keyword id="KW-0690">Ribosome biogenesis</keyword>
<dbReference type="EC" id="3.1.-.-" evidence="1"/>
<dbReference type="EMBL" id="CP000462">
    <property type="protein sequence ID" value="ABK39129.1"/>
    <property type="molecule type" value="Genomic_DNA"/>
</dbReference>
<dbReference type="RefSeq" id="YP_857631.1">
    <property type="nucleotide sequence ID" value="NC_008570.1"/>
</dbReference>
<dbReference type="SMR" id="A0KMY0"/>
<dbReference type="STRING" id="380703.AHA_3131"/>
<dbReference type="EnsemblBacteria" id="ABK39129">
    <property type="protein sequence ID" value="ABK39129"/>
    <property type="gene ID" value="AHA_3131"/>
</dbReference>
<dbReference type="GeneID" id="4489423"/>
<dbReference type="KEGG" id="aha:AHA_3131"/>
<dbReference type="PATRIC" id="fig|380703.7.peg.3130"/>
<dbReference type="eggNOG" id="COG0816">
    <property type="taxonomic scope" value="Bacteria"/>
</dbReference>
<dbReference type="HOGENOM" id="CLU_098240_3_0_6"/>
<dbReference type="OrthoDB" id="9796140at2"/>
<dbReference type="Proteomes" id="UP000000756">
    <property type="component" value="Chromosome"/>
</dbReference>
<dbReference type="GO" id="GO:0005829">
    <property type="term" value="C:cytosol"/>
    <property type="evidence" value="ECO:0007669"/>
    <property type="project" value="TreeGrafter"/>
</dbReference>
<dbReference type="GO" id="GO:0004518">
    <property type="term" value="F:nuclease activity"/>
    <property type="evidence" value="ECO:0007669"/>
    <property type="project" value="UniProtKB-KW"/>
</dbReference>
<dbReference type="GO" id="GO:0000967">
    <property type="term" value="P:rRNA 5'-end processing"/>
    <property type="evidence" value="ECO:0007669"/>
    <property type="project" value="UniProtKB-UniRule"/>
</dbReference>
<dbReference type="CDD" id="cd16964">
    <property type="entry name" value="YqgF"/>
    <property type="match status" value="1"/>
</dbReference>
<dbReference type="FunFam" id="3.30.420.140:FF:000002">
    <property type="entry name" value="Putative pre-16S rRNA nuclease"/>
    <property type="match status" value="1"/>
</dbReference>
<dbReference type="Gene3D" id="3.30.420.140">
    <property type="entry name" value="YqgF/RNase H-like domain"/>
    <property type="match status" value="1"/>
</dbReference>
<dbReference type="HAMAP" id="MF_00651">
    <property type="entry name" value="Nuclease_YqgF"/>
    <property type="match status" value="1"/>
</dbReference>
<dbReference type="InterPro" id="IPR012337">
    <property type="entry name" value="RNaseH-like_sf"/>
</dbReference>
<dbReference type="InterPro" id="IPR005227">
    <property type="entry name" value="YqgF"/>
</dbReference>
<dbReference type="InterPro" id="IPR006641">
    <property type="entry name" value="YqgF/RNaseH-like_dom"/>
</dbReference>
<dbReference type="InterPro" id="IPR037027">
    <property type="entry name" value="YqgF/RNaseH-like_dom_sf"/>
</dbReference>
<dbReference type="NCBIfam" id="TIGR00250">
    <property type="entry name" value="RNAse_H_YqgF"/>
    <property type="match status" value="1"/>
</dbReference>
<dbReference type="PANTHER" id="PTHR33317">
    <property type="entry name" value="POLYNUCLEOTIDYL TRANSFERASE, RIBONUCLEASE H-LIKE SUPERFAMILY PROTEIN"/>
    <property type="match status" value="1"/>
</dbReference>
<dbReference type="PANTHER" id="PTHR33317:SF4">
    <property type="entry name" value="POLYNUCLEOTIDYL TRANSFERASE, RIBONUCLEASE H-LIKE SUPERFAMILY PROTEIN"/>
    <property type="match status" value="1"/>
</dbReference>
<dbReference type="Pfam" id="PF03652">
    <property type="entry name" value="RuvX"/>
    <property type="match status" value="1"/>
</dbReference>
<dbReference type="SMART" id="SM00732">
    <property type="entry name" value="YqgFc"/>
    <property type="match status" value="1"/>
</dbReference>
<dbReference type="SUPFAM" id="SSF53098">
    <property type="entry name" value="Ribonuclease H-like"/>
    <property type="match status" value="1"/>
</dbReference>
<protein>
    <recommendedName>
        <fullName evidence="1">Putative pre-16S rRNA nuclease</fullName>
        <ecNumber evidence="1">3.1.-.-</ecNumber>
    </recommendedName>
</protein>